<reference key="1">
    <citation type="journal article" date="2004" name="Nature">
        <title>Genome evolution in yeasts.</title>
        <authorList>
            <person name="Dujon B."/>
            <person name="Sherman D."/>
            <person name="Fischer G."/>
            <person name="Durrens P."/>
            <person name="Casaregola S."/>
            <person name="Lafontaine I."/>
            <person name="de Montigny J."/>
            <person name="Marck C."/>
            <person name="Neuveglise C."/>
            <person name="Talla E."/>
            <person name="Goffard N."/>
            <person name="Frangeul L."/>
            <person name="Aigle M."/>
            <person name="Anthouard V."/>
            <person name="Babour A."/>
            <person name="Barbe V."/>
            <person name="Barnay S."/>
            <person name="Blanchin S."/>
            <person name="Beckerich J.-M."/>
            <person name="Beyne E."/>
            <person name="Bleykasten C."/>
            <person name="Boisrame A."/>
            <person name="Boyer J."/>
            <person name="Cattolico L."/>
            <person name="Confanioleri F."/>
            <person name="de Daruvar A."/>
            <person name="Despons L."/>
            <person name="Fabre E."/>
            <person name="Fairhead C."/>
            <person name="Ferry-Dumazet H."/>
            <person name="Groppi A."/>
            <person name="Hantraye F."/>
            <person name="Hennequin C."/>
            <person name="Jauniaux N."/>
            <person name="Joyet P."/>
            <person name="Kachouri R."/>
            <person name="Kerrest A."/>
            <person name="Koszul R."/>
            <person name="Lemaire M."/>
            <person name="Lesur I."/>
            <person name="Ma L."/>
            <person name="Muller H."/>
            <person name="Nicaud J.-M."/>
            <person name="Nikolski M."/>
            <person name="Oztas S."/>
            <person name="Ozier-Kalogeropoulos O."/>
            <person name="Pellenz S."/>
            <person name="Potier S."/>
            <person name="Richard G.-F."/>
            <person name="Straub M.-L."/>
            <person name="Suleau A."/>
            <person name="Swennen D."/>
            <person name="Tekaia F."/>
            <person name="Wesolowski-Louvel M."/>
            <person name="Westhof E."/>
            <person name="Wirth B."/>
            <person name="Zeniou-Meyer M."/>
            <person name="Zivanovic Y."/>
            <person name="Bolotin-Fukuhara M."/>
            <person name="Thierry A."/>
            <person name="Bouchier C."/>
            <person name="Caudron B."/>
            <person name="Scarpelli C."/>
            <person name="Gaillardin C."/>
            <person name="Weissenbach J."/>
            <person name="Wincker P."/>
            <person name="Souciet J.-L."/>
        </authorList>
    </citation>
    <scope>NUCLEOTIDE SEQUENCE [LARGE SCALE GENOMIC DNA]</scope>
    <source>
        <strain>ATCC 2001 / BCRC 20586 / JCM 3761 / NBRC 0622 / NRRL Y-65 / CBS 138</strain>
    </source>
</reference>
<comment type="similarity">
    <text evidence="2">Belongs to the EFR3 family.</text>
</comment>
<evidence type="ECO:0000256" key="1">
    <source>
        <dbReference type="SAM" id="MobiDB-lite"/>
    </source>
</evidence>
<evidence type="ECO:0000305" key="2"/>
<organism>
    <name type="scientific">Candida glabrata (strain ATCC 2001 / BCRC 20586 / JCM 3761 / NBRC 0622 / NRRL Y-65 / CBS 138)</name>
    <name type="common">Yeast</name>
    <name type="synonym">Nakaseomyces glabratus</name>
    <dbReference type="NCBI Taxonomy" id="284593"/>
    <lineage>
        <taxon>Eukaryota</taxon>
        <taxon>Fungi</taxon>
        <taxon>Dikarya</taxon>
        <taxon>Ascomycota</taxon>
        <taxon>Saccharomycotina</taxon>
        <taxon>Saccharomycetes</taxon>
        <taxon>Saccharomycetales</taxon>
        <taxon>Saccharomycetaceae</taxon>
        <taxon>Nakaseomyces</taxon>
    </lineage>
</organism>
<proteinExistence type="inferred from homology"/>
<dbReference type="EMBL" id="CR380952">
    <property type="protein sequence ID" value="CAG59058.1"/>
    <property type="molecule type" value="Genomic_DNA"/>
</dbReference>
<dbReference type="RefSeq" id="XP_446134.1">
    <property type="nucleotide sequence ID" value="XM_446134.1"/>
</dbReference>
<dbReference type="SMR" id="Q6FUG0"/>
<dbReference type="FunCoup" id="Q6FUG0">
    <property type="interactions" value="75"/>
</dbReference>
<dbReference type="STRING" id="284593.Q6FUG0"/>
<dbReference type="EnsemblFungi" id="CAGL0F03773g-T">
    <property type="protein sequence ID" value="CAGL0F03773g-T-p1"/>
    <property type="gene ID" value="CAGL0F03773g"/>
</dbReference>
<dbReference type="KEGG" id="cgr:2887797"/>
<dbReference type="CGD" id="CAL0130914">
    <property type="gene designation" value="CAGL0F03773g"/>
</dbReference>
<dbReference type="VEuPathDB" id="FungiDB:CAGL0F03773g"/>
<dbReference type="eggNOG" id="KOG1877">
    <property type="taxonomic scope" value="Eukaryota"/>
</dbReference>
<dbReference type="HOGENOM" id="CLU_371806_0_0_1"/>
<dbReference type="InParanoid" id="Q6FUG0"/>
<dbReference type="OMA" id="LYYVNSR"/>
<dbReference type="Proteomes" id="UP000002428">
    <property type="component" value="Chromosome F"/>
</dbReference>
<dbReference type="GO" id="GO:0005886">
    <property type="term" value="C:plasma membrane"/>
    <property type="evidence" value="ECO:0007669"/>
    <property type="project" value="EnsemblFungi"/>
</dbReference>
<dbReference type="GO" id="GO:0072659">
    <property type="term" value="P:protein localization to plasma membrane"/>
    <property type="evidence" value="ECO:0007669"/>
    <property type="project" value="EnsemblFungi"/>
</dbReference>
<dbReference type="InterPro" id="IPR039786">
    <property type="entry name" value="EFR3"/>
</dbReference>
<dbReference type="InterPro" id="IPR049150">
    <property type="entry name" value="EFR3_HEAT-like_rpt"/>
</dbReference>
<dbReference type="PANTHER" id="PTHR47766">
    <property type="entry name" value="PROTEIN EFR3"/>
    <property type="match status" value="1"/>
</dbReference>
<dbReference type="PANTHER" id="PTHR47766:SF1">
    <property type="entry name" value="PROTEIN EFR3"/>
    <property type="match status" value="1"/>
</dbReference>
<dbReference type="Pfam" id="PF21072">
    <property type="entry name" value="EFR3"/>
    <property type="match status" value="1"/>
</dbReference>
<sequence length="749" mass="84960">MQLGHIFTPKHQKLVNQCYPSGRAPDKKPKSSETSYLIYYVNSRSSKLEKVSNYLIKRTNTDLSRRRVGNVCVTLELMAKIVDHCKENLNVFVKEFLTLMNMVLTNNSINNDVTVIELLEITFGTICRNLDGAYYGGDTEFIKMFKSFVDLLFEVVSKRLNNDDLMLKVCIDISTIIGIASDPQLNYLVPKCVETAIDQLQARYPQFKENSLLEQPSLTKRLSKTQTRAQEVLEIPTADNDLCVATLHNYFNTTETDKLNLSIRSLIKKLQSTPNKELLEFISNDIPVQLRYIVVLLLTRQVSNYERNQVSGSQGNPDGALNSLKLISCLLVSKISIVGLSVLDIMRKVLAVQLKSKESMPLVHQCRVTIKDLNNKIYYSEQTSDMLYDLVVKIKNVQNEVEKRILVDDMKYIVDDISQPVINVDLLTELVPFMKGSVIQLLNITEEHISGGSTLSRLFQMVRDIEDRNLQSKAMSIIFDKYKKIILLPGLNYFQMNIKEPEYTYYLYHFNAAKTLGVTSYYSETQQKLDNGELFTKEELMKYYKNANNTQFGEKGMQILMSYDNQISNSDLLNDRPLSPVFSSKPLSSPMGLISPQAQTNTQLNQPMRFVSDDVHSWKVSRPSIPKVSDLKKAMKNGSSTKNKPLRGSQSVKSRVTNITFLLSELRSTTAGDDSHIIDPDEEEVVGIDKMEIARSLSGRGRNSVVVEDVSTNRASFVPATVNEDDEFRDAVEDVEAYSTSRGKIFANY</sequence>
<keyword id="KW-1185">Reference proteome</keyword>
<gene>
    <name type="primary">EFR3</name>
    <name type="ordered locus">CAGL0F03773g</name>
</gene>
<protein>
    <recommendedName>
        <fullName>Protein EFR3</fullName>
    </recommendedName>
</protein>
<feature type="chain" id="PRO_0000270773" description="Protein EFR3">
    <location>
        <begin position="1"/>
        <end position="749"/>
    </location>
</feature>
<feature type="region of interest" description="Disordered" evidence="1">
    <location>
        <begin position="633"/>
        <end position="652"/>
    </location>
</feature>
<feature type="compositionally biased region" description="Polar residues" evidence="1">
    <location>
        <begin position="637"/>
        <end position="652"/>
    </location>
</feature>
<name>EFR3_CANGA</name>
<accession>Q6FUG0</accession>